<dbReference type="EC" id="3.5.3.23" evidence="1"/>
<dbReference type="EMBL" id="CT573326">
    <property type="protein sequence ID" value="CAK16586.1"/>
    <property type="molecule type" value="Genomic_DNA"/>
</dbReference>
<dbReference type="RefSeq" id="WP_011534961.1">
    <property type="nucleotide sequence ID" value="NC_008027.1"/>
</dbReference>
<dbReference type="SMR" id="Q1I6Z6"/>
<dbReference type="STRING" id="384676.PSEEN3878"/>
<dbReference type="GeneID" id="32806916"/>
<dbReference type="KEGG" id="pen:PSEEN3878"/>
<dbReference type="eggNOG" id="COG3724">
    <property type="taxonomic scope" value="Bacteria"/>
</dbReference>
<dbReference type="HOGENOM" id="CLU_053835_0_0_6"/>
<dbReference type="OrthoDB" id="248552at2"/>
<dbReference type="UniPathway" id="UPA00185">
    <property type="reaction ID" value="UER00280"/>
</dbReference>
<dbReference type="Proteomes" id="UP000000658">
    <property type="component" value="Chromosome"/>
</dbReference>
<dbReference type="GO" id="GO:0009015">
    <property type="term" value="F:N-succinylarginine dihydrolase activity"/>
    <property type="evidence" value="ECO:0007669"/>
    <property type="project" value="UniProtKB-UniRule"/>
</dbReference>
<dbReference type="GO" id="GO:0019544">
    <property type="term" value="P:arginine catabolic process to glutamate"/>
    <property type="evidence" value="ECO:0007669"/>
    <property type="project" value="UniProtKB-UniRule"/>
</dbReference>
<dbReference type="GO" id="GO:0019545">
    <property type="term" value="P:arginine catabolic process to succinate"/>
    <property type="evidence" value="ECO:0007669"/>
    <property type="project" value="UniProtKB-UniRule"/>
</dbReference>
<dbReference type="FunFam" id="3.75.10.20:FF:000001">
    <property type="entry name" value="N-succinylarginine dihydrolase"/>
    <property type="match status" value="1"/>
</dbReference>
<dbReference type="Gene3D" id="3.75.10.20">
    <property type="entry name" value="Succinylarginine dihydrolase"/>
    <property type="match status" value="1"/>
</dbReference>
<dbReference type="HAMAP" id="MF_01172">
    <property type="entry name" value="AstB"/>
    <property type="match status" value="1"/>
</dbReference>
<dbReference type="InterPro" id="IPR037031">
    <property type="entry name" value="AstB_sf"/>
</dbReference>
<dbReference type="InterPro" id="IPR007079">
    <property type="entry name" value="SuccinylArg_d-Hdrlase_AstB"/>
</dbReference>
<dbReference type="NCBIfam" id="TIGR03241">
    <property type="entry name" value="arg_catab_astB"/>
    <property type="match status" value="1"/>
</dbReference>
<dbReference type="NCBIfam" id="NF009789">
    <property type="entry name" value="PRK13281.1"/>
    <property type="match status" value="1"/>
</dbReference>
<dbReference type="PANTHER" id="PTHR30420">
    <property type="entry name" value="N-SUCCINYLARGININE DIHYDROLASE"/>
    <property type="match status" value="1"/>
</dbReference>
<dbReference type="PANTHER" id="PTHR30420:SF2">
    <property type="entry name" value="N-SUCCINYLARGININE DIHYDROLASE"/>
    <property type="match status" value="1"/>
</dbReference>
<dbReference type="Pfam" id="PF04996">
    <property type="entry name" value="AstB"/>
    <property type="match status" value="1"/>
</dbReference>
<dbReference type="SUPFAM" id="SSF55909">
    <property type="entry name" value="Pentein"/>
    <property type="match status" value="1"/>
</dbReference>
<proteinExistence type="inferred from homology"/>
<reference key="1">
    <citation type="journal article" date="2006" name="Nat. Biotechnol.">
        <title>Complete genome sequence of the entomopathogenic and metabolically versatile soil bacterium Pseudomonas entomophila.</title>
        <authorList>
            <person name="Vodovar N."/>
            <person name="Vallenet D."/>
            <person name="Cruveiller S."/>
            <person name="Rouy Z."/>
            <person name="Barbe V."/>
            <person name="Acosta C."/>
            <person name="Cattolico L."/>
            <person name="Jubin C."/>
            <person name="Lajus A."/>
            <person name="Segurens B."/>
            <person name="Vacherie B."/>
            <person name="Wincker P."/>
            <person name="Weissenbach J."/>
            <person name="Lemaitre B."/>
            <person name="Medigue C."/>
            <person name="Boccard F."/>
        </authorList>
    </citation>
    <scope>NUCLEOTIDE SEQUENCE [LARGE SCALE GENOMIC DNA]</scope>
    <source>
        <strain>L48</strain>
    </source>
</reference>
<protein>
    <recommendedName>
        <fullName evidence="1">N-succinylarginine dihydrolase</fullName>
        <ecNumber evidence="1">3.5.3.23</ecNumber>
    </recommendedName>
</protein>
<keyword id="KW-0056">Arginine metabolism</keyword>
<keyword id="KW-0378">Hydrolase</keyword>
<evidence type="ECO:0000255" key="1">
    <source>
        <dbReference type="HAMAP-Rule" id="MF_01172"/>
    </source>
</evidence>
<evidence type="ECO:0000256" key="2">
    <source>
        <dbReference type="SAM" id="MobiDB-lite"/>
    </source>
</evidence>
<organism>
    <name type="scientific">Pseudomonas entomophila (strain L48)</name>
    <dbReference type="NCBI Taxonomy" id="384676"/>
    <lineage>
        <taxon>Bacteria</taxon>
        <taxon>Pseudomonadati</taxon>
        <taxon>Pseudomonadota</taxon>
        <taxon>Gammaproteobacteria</taxon>
        <taxon>Pseudomonadales</taxon>
        <taxon>Pseudomonadaceae</taxon>
        <taxon>Pseudomonas</taxon>
    </lineage>
</organism>
<sequence length="449" mass="48833">MKSFEVNFDGLVGPTHNYGGLSYGNVASQSNSQQGSNPREAARQGLAKMKALMEMGFKQGVLAPQERPDIAALRRLGFTGSDAEVIQRAAKDAMPLLVASCSASSMWVANAATVSPSADTADGRVHFTAANLNCKYHRSIEHPTTSRVLGAMFSDEKVFAHHEALPAVAQFGDEGAANHTRFCRAYGEAGVEFFVYGRSAFDSRYPAPQKYPARQTLEASQAVARLHGLSDDGVVYAQQNPAVIDQGVFHNDVISVGNGEVLFYHEDAFLETDAVLGQLQAKLASKGGNFKGICVPRAAVTVEDAVRSYLFNSQLLSREDGSMLLVVPEECRNNERVWTYLGQLTSQGGPVKEVKVFDLKQSMQNGGGPACLRLRVALKENELAAVNPGVIMTASLYDTLVQWVDKHYRDRLGEADLADPQLLVECRTALDELTQILKLGSVYPFQRQP</sequence>
<gene>
    <name evidence="1" type="primary">astB</name>
    <name type="ordered locus">PSEEN3878</name>
</gene>
<comment type="function">
    <text evidence="1">Catalyzes the hydrolysis of N(2)-succinylarginine into N(2)-succinylornithine, ammonia and CO(2).</text>
</comment>
<comment type="catalytic activity">
    <reaction evidence="1">
        <text>N(2)-succinyl-L-arginine + 2 H2O + 2 H(+) = N(2)-succinyl-L-ornithine + 2 NH4(+) + CO2</text>
        <dbReference type="Rhea" id="RHEA:19533"/>
        <dbReference type="ChEBI" id="CHEBI:15377"/>
        <dbReference type="ChEBI" id="CHEBI:15378"/>
        <dbReference type="ChEBI" id="CHEBI:16526"/>
        <dbReference type="ChEBI" id="CHEBI:28938"/>
        <dbReference type="ChEBI" id="CHEBI:58241"/>
        <dbReference type="ChEBI" id="CHEBI:58514"/>
        <dbReference type="EC" id="3.5.3.23"/>
    </reaction>
</comment>
<comment type="pathway">
    <text evidence="1">Amino-acid degradation; L-arginine degradation via AST pathway; L-glutamate and succinate from L-arginine: step 2/5.</text>
</comment>
<comment type="subunit">
    <text evidence="1">Homodimer.</text>
</comment>
<comment type="similarity">
    <text evidence="1">Belongs to the succinylarginine dihydrolase family.</text>
</comment>
<accession>Q1I6Z6</accession>
<feature type="chain" id="PRO_1000065731" description="N-succinylarginine dihydrolase">
    <location>
        <begin position="1"/>
        <end position="449"/>
    </location>
</feature>
<feature type="region of interest" description="Disordered" evidence="2">
    <location>
        <begin position="23"/>
        <end position="43"/>
    </location>
</feature>
<feature type="compositionally biased region" description="Polar residues" evidence="2">
    <location>
        <begin position="25"/>
        <end position="37"/>
    </location>
</feature>
<feature type="active site" evidence="1">
    <location>
        <position position="174"/>
    </location>
</feature>
<feature type="active site" evidence="1">
    <location>
        <position position="250"/>
    </location>
</feature>
<feature type="active site" description="Nucleophile" evidence="1">
    <location>
        <position position="371"/>
    </location>
</feature>
<feature type="binding site" evidence="1">
    <location>
        <begin position="19"/>
        <end position="28"/>
    </location>
    <ligand>
        <name>substrate</name>
    </ligand>
</feature>
<feature type="binding site" evidence="1">
    <location>
        <position position="110"/>
    </location>
    <ligand>
        <name>substrate</name>
    </ligand>
</feature>
<feature type="binding site" evidence="1">
    <location>
        <begin position="137"/>
        <end position="138"/>
    </location>
    <ligand>
        <name>substrate</name>
    </ligand>
</feature>
<feature type="binding site" evidence="1">
    <location>
        <position position="214"/>
    </location>
    <ligand>
        <name>substrate</name>
    </ligand>
</feature>
<feature type="binding site" evidence="1">
    <location>
        <position position="252"/>
    </location>
    <ligand>
        <name>substrate</name>
    </ligand>
</feature>
<feature type="binding site" evidence="1">
    <location>
        <position position="365"/>
    </location>
    <ligand>
        <name>substrate</name>
    </ligand>
</feature>
<name>ASTB_PSEE4</name>